<proteinExistence type="inferred from homology"/>
<name>RS10_CAMLR</name>
<gene>
    <name evidence="1" type="primary">rpsJ</name>
    <name type="ordered locus">Cla_0058</name>
</gene>
<protein>
    <recommendedName>
        <fullName evidence="1">Small ribosomal subunit protein uS10</fullName>
    </recommendedName>
    <alternativeName>
        <fullName evidence="2">30S ribosomal protein S10</fullName>
    </alternativeName>
</protein>
<comment type="function">
    <text evidence="1">Involved in the binding of tRNA to the ribosomes.</text>
</comment>
<comment type="subunit">
    <text evidence="1">Part of the 30S ribosomal subunit.</text>
</comment>
<comment type="similarity">
    <text evidence="1">Belongs to the universal ribosomal protein uS10 family.</text>
</comment>
<dbReference type="EMBL" id="CP000932">
    <property type="protein sequence ID" value="ACM63424.1"/>
    <property type="molecule type" value="Genomic_DNA"/>
</dbReference>
<dbReference type="RefSeq" id="WP_012660810.1">
    <property type="nucleotide sequence ID" value="NC_012039.1"/>
</dbReference>
<dbReference type="SMR" id="B9KED9"/>
<dbReference type="STRING" id="306263.Cla_0058"/>
<dbReference type="GeneID" id="93004153"/>
<dbReference type="KEGG" id="cla:CLA_0058"/>
<dbReference type="eggNOG" id="COG0051">
    <property type="taxonomic scope" value="Bacteria"/>
</dbReference>
<dbReference type="HOGENOM" id="CLU_122625_1_2_7"/>
<dbReference type="Proteomes" id="UP000007727">
    <property type="component" value="Chromosome"/>
</dbReference>
<dbReference type="GO" id="GO:1990904">
    <property type="term" value="C:ribonucleoprotein complex"/>
    <property type="evidence" value="ECO:0007669"/>
    <property type="project" value="UniProtKB-KW"/>
</dbReference>
<dbReference type="GO" id="GO:0005840">
    <property type="term" value="C:ribosome"/>
    <property type="evidence" value="ECO:0007669"/>
    <property type="project" value="UniProtKB-KW"/>
</dbReference>
<dbReference type="GO" id="GO:0003735">
    <property type="term" value="F:structural constituent of ribosome"/>
    <property type="evidence" value="ECO:0007669"/>
    <property type="project" value="InterPro"/>
</dbReference>
<dbReference type="GO" id="GO:0000049">
    <property type="term" value="F:tRNA binding"/>
    <property type="evidence" value="ECO:0007669"/>
    <property type="project" value="UniProtKB-UniRule"/>
</dbReference>
<dbReference type="GO" id="GO:0006412">
    <property type="term" value="P:translation"/>
    <property type="evidence" value="ECO:0007669"/>
    <property type="project" value="UniProtKB-UniRule"/>
</dbReference>
<dbReference type="FunFam" id="3.30.70.600:FF:000003">
    <property type="entry name" value="30S ribosomal protein S10"/>
    <property type="match status" value="1"/>
</dbReference>
<dbReference type="Gene3D" id="3.30.70.600">
    <property type="entry name" value="Ribosomal protein S10 domain"/>
    <property type="match status" value="1"/>
</dbReference>
<dbReference type="HAMAP" id="MF_00508">
    <property type="entry name" value="Ribosomal_uS10"/>
    <property type="match status" value="1"/>
</dbReference>
<dbReference type="InterPro" id="IPR001848">
    <property type="entry name" value="Ribosomal_uS10"/>
</dbReference>
<dbReference type="InterPro" id="IPR018268">
    <property type="entry name" value="Ribosomal_uS10_CS"/>
</dbReference>
<dbReference type="InterPro" id="IPR027486">
    <property type="entry name" value="Ribosomal_uS10_dom"/>
</dbReference>
<dbReference type="InterPro" id="IPR036838">
    <property type="entry name" value="Ribosomal_uS10_dom_sf"/>
</dbReference>
<dbReference type="NCBIfam" id="NF001861">
    <property type="entry name" value="PRK00596.1"/>
    <property type="match status" value="1"/>
</dbReference>
<dbReference type="NCBIfam" id="TIGR01049">
    <property type="entry name" value="rpsJ_bact"/>
    <property type="match status" value="1"/>
</dbReference>
<dbReference type="PANTHER" id="PTHR11700">
    <property type="entry name" value="30S RIBOSOMAL PROTEIN S10 FAMILY MEMBER"/>
    <property type="match status" value="1"/>
</dbReference>
<dbReference type="Pfam" id="PF00338">
    <property type="entry name" value="Ribosomal_S10"/>
    <property type="match status" value="1"/>
</dbReference>
<dbReference type="PRINTS" id="PR00971">
    <property type="entry name" value="RIBOSOMALS10"/>
</dbReference>
<dbReference type="SMART" id="SM01403">
    <property type="entry name" value="Ribosomal_S10"/>
    <property type="match status" value="1"/>
</dbReference>
<dbReference type="SUPFAM" id="SSF54999">
    <property type="entry name" value="Ribosomal protein S10"/>
    <property type="match status" value="1"/>
</dbReference>
<dbReference type="PROSITE" id="PS00361">
    <property type="entry name" value="RIBOSOMAL_S10"/>
    <property type="match status" value="1"/>
</dbReference>
<keyword id="KW-1185">Reference proteome</keyword>
<keyword id="KW-0687">Ribonucleoprotein</keyword>
<keyword id="KW-0689">Ribosomal protein</keyword>
<organism>
    <name type="scientific">Campylobacter lari (strain RM2100 / D67 / ATCC BAA-1060)</name>
    <dbReference type="NCBI Taxonomy" id="306263"/>
    <lineage>
        <taxon>Bacteria</taxon>
        <taxon>Pseudomonadati</taxon>
        <taxon>Campylobacterota</taxon>
        <taxon>Epsilonproteobacteria</taxon>
        <taxon>Campylobacterales</taxon>
        <taxon>Campylobacteraceae</taxon>
        <taxon>Campylobacter</taxon>
    </lineage>
</organism>
<accession>B9KED9</accession>
<sequence>MERIRLKLKAYDHRVLDRTVAAIVEAVKRTGADIRGPVPMPTKIKRYTVLKSPHINKDSREQFEMRIHARMLDIVAATPDTVDSLTKLDLAPEVNVEVRAMGK</sequence>
<evidence type="ECO:0000255" key="1">
    <source>
        <dbReference type="HAMAP-Rule" id="MF_00508"/>
    </source>
</evidence>
<evidence type="ECO:0000305" key="2"/>
<feature type="chain" id="PRO_1000196295" description="Small ribosomal subunit protein uS10">
    <location>
        <begin position="1"/>
        <end position="103"/>
    </location>
</feature>
<reference key="1">
    <citation type="journal article" date="2008" name="Foodborne Pathog. Dis.">
        <title>The complete genome sequence and analysis of the human pathogen Campylobacter lari.</title>
        <authorList>
            <person name="Miller W.G."/>
            <person name="Wang G."/>
            <person name="Binnewies T.T."/>
            <person name="Parker C.T."/>
        </authorList>
    </citation>
    <scope>NUCLEOTIDE SEQUENCE [LARGE SCALE GENOMIC DNA]</scope>
    <source>
        <strain>RM2100 / D67 / ATCC BAA-1060</strain>
    </source>
</reference>